<protein>
    <recommendedName>
        <fullName>DNA replication licensing factor MCM7</fullName>
        <ecNumber evidence="10">3.6.4.12</ecNumber>
    </recommendedName>
    <alternativeName>
        <fullName>CDC47 homolog</fullName>
    </alternativeName>
    <alternativeName>
        <fullName>P1.1-MCM3</fullName>
    </alternativeName>
</protein>
<dbReference type="EC" id="3.6.4.12" evidence="10"/>
<dbReference type="EMBL" id="D55716">
    <property type="protein sequence ID" value="BAA09534.1"/>
    <property type="molecule type" value="mRNA"/>
</dbReference>
<dbReference type="EMBL" id="AK055379">
    <property type="protein sequence ID" value="BAG51508.1"/>
    <property type="molecule type" value="mRNA"/>
</dbReference>
<dbReference type="EMBL" id="AC073842">
    <property type="status" value="NOT_ANNOTATED_CDS"/>
    <property type="molecule type" value="Genomic_DNA"/>
</dbReference>
<dbReference type="EMBL" id="CH236956">
    <property type="protein sequence ID" value="EAL23855.1"/>
    <property type="molecule type" value="Genomic_DNA"/>
</dbReference>
<dbReference type="EMBL" id="CH236956">
    <property type="protein sequence ID" value="EAL23856.1"/>
    <property type="molecule type" value="Genomic_DNA"/>
</dbReference>
<dbReference type="EMBL" id="CH471091">
    <property type="protein sequence ID" value="EAW76598.1"/>
    <property type="molecule type" value="Genomic_DNA"/>
</dbReference>
<dbReference type="EMBL" id="CH471091">
    <property type="protein sequence ID" value="EAW76599.1"/>
    <property type="molecule type" value="Genomic_DNA"/>
</dbReference>
<dbReference type="EMBL" id="BC009398">
    <property type="protein sequence ID" value="AAH09398.1"/>
    <property type="molecule type" value="mRNA"/>
</dbReference>
<dbReference type="EMBL" id="BC013375">
    <property type="protein sequence ID" value="AAH13375.1"/>
    <property type="molecule type" value="mRNA"/>
</dbReference>
<dbReference type="EMBL" id="X74796">
    <property type="protein sequence ID" value="CAA52803.1"/>
    <property type="molecule type" value="mRNA"/>
</dbReference>
<dbReference type="EMBL" id="D28480">
    <property type="protein sequence ID" value="BAA05839.1"/>
    <property type="molecule type" value="mRNA"/>
</dbReference>
<dbReference type="CCDS" id="CCDS5683.1">
    <molecule id="P33993-1"/>
</dbReference>
<dbReference type="CCDS" id="CCDS5684.1">
    <molecule id="P33993-3"/>
</dbReference>
<dbReference type="PIR" id="S70583">
    <property type="entry name" value="S70583"/>
</dbReference>
<dbReference type="RefSeq" id="NP_001265524.1">
    <molecule id="P33993-3"/>
    <property type="nucleotide sequence ID" value="NM_001278595.2"/>
</dbReference>
<dbReference type="RefSeq" id="NP_005907.3">
    <molecule id="P33993-1"/>
    <property type="nucleotide sequence ID" value="NM_005916.4"/>
</dbReference>
<dbReference type="RefSeq" id="NP_877577.1">
    <molecule id="P33993-3"/>
    <property type="nucleotide sequence ID" value="NM_182776.3"/>
</dbReference>
<dbReference type="PDB" id="6XTX">
    <property type="method" value="EM"/>
    <property type="resolution" value="3.29 A"/>
    <property type="chains" value="7=1-719"/>
</dbReference>
<dbReference type="PDB" id="6XTY">
    <property type="method" value="EM"/>
    <property type="resolution" value="6.77 A"/>
    <property type="chains" value="7=1-719"/>
</dbReference>
<dbReference type="PDB" id="7PFO">
    <property type="method" value="EM"/>
    <property type="resolution" value="3.20 A"/>
    <property type="chains" value="7=1-719"/>
</dbReference>
<dbReference type="PDB" id="7PLO">
    <property type="method" value="EM"/>
    <property type="resolution" value="2.80 A"/>
    <property type="chains" value="7=1-719"/>
</dbReference>
<dbReference type="PDB" id="7W1Y">
    <property type="method" value="EM"/>
    <property type="resolution" value="2.59 A"/>
    <property type="chains" value="7/F=1-719"/>
</dbReference>
<dbReference type="PDB" id="7W68">
    <property type="method" value="EM"/>
    <property type="resolution" value="4.40 A"/>
    <property type="chains" value="F=1-719"/>
</dbReference>
<dbReference type="PDB" id="8B9D">
    <property type="method" value="EM"/>
    <property type="resolution" value="3.40 A"/>
    <property type="chains" value="7=1-719"/>
</dbReference>
<dbReference type="PDB" id="8RWV">
    <property type="method" value="EM"/>
    <property type="resolution" value="6.68 A"/>
    <property type="chains" value="7=1-719"/>
</dbReference>
<dbReference type="PDB" id="8S09">
    <property type="method" value="EM"/>
    <property type="resolution" value="3.10 A"/>
    <property type="chains" value="7/F=1-719"/>
</dbReference>
<dbReference type="PDB" id="8S0A">
    <property type="method" value="EM"/>
    <property type="resolution" value="3.20 A"/>
    <property type="chains" value="7=1-719"/>
</dbReference>
<dbReference type="PDB" id="8S0B">
    <property type="method" value="EM"/>
    <property type="resolution" value="3.60 A"/>
    <property type="chains" value="7=1-719"/>
</dbReference>
<dbReference type="PDB" id="8S0D">
    <property type="method" value="EM"/>
    <property type="resolution" value="3.60 A"/>
    <property type="chains" value="7=1-719"/>
</dbReference>
<dbReference type="PDB" id="8S0E">
    <property type="method" value="EM"/>
    <property type="resolution" value="3.80 A"/>
    <property type="chains" value="7=1-719"/>
</dbReference>
<dbReference type="PDB" id="8S0F">
    <property type="method" value="EM"/>
    <property type="resolution" value="4.10 A"/>
    <property type="chains" value="7=1-719"/>
</dbReference>
<dbReference type="PDB" id="8W0E">
    <property type="method" value="EM"/>
    <property type="resolution" value="3.40 A"/>
    <property type="chains" value="7=1-719"/>
</dbReference>
<dbReference type="PDB" id="8W0F">
    <property type="method" value="EM"/>
    <property type="resolution" value="2.80 A"/>
    <property type="chains" value="7/F=1-719"/>
</dbReference>
<dbReference type="PDB" id="8W0G">
    <property type="method" value="EM"/>
    <property type="resolution" value="3.80 A"/>
    <property type="chains" value="7/F=1-719"/>
</dbReference>
<dbReference type="PDB" id="8W0I">
    <property type="method" value="EM"/>
    <property type="resolution" value="3.50 A"/>
    <property type="chains" value="7=1-719"/>
</dbReference>
<dbReference type="PDB" id="9CAQ">
    <property type="method" value="EM"/>
    <property type="resolution" value="3.20 A"/>
    <property type="chains" value="7/F=1-719"/>
</dbReference>
<dbReference type="PDBsum" id="6XTX"/>
<dbReference type="PDBsum" id="6XTY"/>
<dbReference type="PDBsum" id="7PFO"/>
<dbReference type="PDBsum" id="7PLO"/>
<dbReference type="PDBsum" id="7W1Y"/>
<dbReference type="PDBsum" id="7W68"/>
<dbReference type="PDBsum" id="8B9D"/>
<dbReference type="PDBsum" id="8RWV"/>
<dbReference type="PDBsum" id="8S09"/>
<dbReference type="PDBsum" id="8S0A"/>
<dbReference type="PDBsum" id="8S0B"/>
<dbReference type="PDBsum" id="8S0D"/>
<dbReference type="PDBsum" id="8S0E"/>
<dbReference type="PDBsum" id="8S0F"/>
<dbReference type="PDBsum" id="8W0E"/>
<dbReference type="PDBsum" id="8W0F"/>
<dbReference type="PDBsum" id="8W0G"/>
<dbReference type="PDBsum" id="8W0I"/>
<dbReference type="PDBsum" id="9CAQ"/>
<dbReference type="EMDB" id="EMD-10619"/>
<dbReference type="EMDB" id="EMD-10621"/>
<dbReference type="EMDB" id="EMD-13375"/>
<dbReference type="EMDB" id="EMD-13494"/>
<dbReference type="EMDB" id="EMD-19566"/>
<dbReference type="EMDB" id="EMD-19618"/>
<dbReference type="EMDB" id="EMD-19619"/>
<dbReference type="EMDB" id="EMD-19620"/>
<dbReference type="EMDB" id="EMD-19622"/>
<dbReference type="EMDB" id="EMD-19623"/>
<dbReference type="EMDB" id="EMD-19624"/>
<dbReference type="EMDB" id="EMD-32258"/>
<dbReference type="EMDB" id="EMD-32326"/>
<dbReference type="EMDB" id="EMD-43707"/>
<dbReference type="EMDB" id="EMD-43708"/>
<dbReference type="EMDB" id="EMD-43709"/>
<dbReference type="EMDB" id="EMD-43710"/>
<dbReference type="EMDB" id="EMD-45400"/>
<dbReference type="SMR" id="P33993"/>
<dbReference type="BioGRID" id="110344">
    <property type="interactions" value="438"/>
</dbReference>
<dbReference type="ComplexPortal" id="CPX-2940">
    <property type="entry name" value="MCM complex"/>
</dbReference>
<dbReference type="CORUM" id="P33993"/>
<dbReference type="DIP" id="DIP-27580N"/>
<dbReference type="FunCoup" id="P33993">
    <property type="interactions" value="2645"/>
</dbReference>
<dbReference type="IntAct" id="P33993">
    <property type="interactions" value="265"/>
</dbReference>
<dbReference type="MINT" id="P33993"/>
<dbReference type="STRING" id="9606.ENSP00000307288"/>
<dbReference type="ChEMBL" id="CHEMBL4630816"/>
<dbReference type="GlyGen" id="P33993">
    <property type="glycosylation" value="3 sites, 1 O-linked glycan (3 sites)"/>
</dbReference>
<dbReference type="iPTMnet" id="P33993"/>
<dbReference type="MetOSite" id="P33993"/>
<dbReference type="PhosphoSitePlus" id="P33993"/>
<dbReference type="SwissPalm" id="P33993"/>
<dbReference type="BioMuta" id="MCM7"/>
<dbReference type="DMDM" id="20981696"/>
<dbReference type="jPOST" id="P33993"/>
<dbReference type="MassIVE" id="P33993"/>
<dbReference type="PaxDb" id="9606-ENSP00000307288"/>
<dbReference type="PeptideAtlas" id="P33993"/>
<dbReference type="ProteomicsDB" id="54936">
    <molecule id="P33993-1"/>
</dbReference>
<dbReference type="ProteomicsDB" id="54937">
    <molecule id="P33993-2"/>
</dbReference>
<dbReference type="ProteomicsDB" id="641"/>
<dbReference type="Pumba" id="P33993"/>
<dbReference type="Antibodypedia" id="1289">
    <property type="antibodies" value="1200 antibodies from 46 providers"/>
</dbReference>
<dbReference type="DNASU" id="4176"/>
<dbReference type="Ensembl" id="ENST00000303887.10">
    <molecule id="P33993-1"/>
    <property type="protein sequence ID" value="ENSP00000307288.5"/>
    <property type="gene ID" value="ENSG00000166508.19"/>
</dbReference>
<dbReference type="Ensembl" id="ENST00000343023.10">
    <molecule id="P33993-2"/>
    <property type="protein sequence ID" value="ENSP00000344006.6"/>
    <property type="gene ID" value="ENSG00000166508.19"/>
</dbReference>
<dbReference type="GeneID" id="4176"/>
<dbReference type="KEGG" id="hsa:4176"/>
<dbReference type="MANE-Select" id="ENST00000303887.10">
    <property type="protein sequence ID" value="ENSP00000307288.5"/>
    <property type="RefSeq nucleotide sequence ID" value="NM_005916.5"/>
    <property type="RefSeq protein sequence ID" value="NP_005907.3"/>
</dbReference>
<dbReference type="UCSC" id="uc003usv.3">
    <molecule id="P33993-1"/>
    <property type="organism name" value="human"/>
</dbReference>
<dbReference type="AGR" id="HGNC:6950"/>
<dbReference type="CTD" id="4176"/>
<dbReference type="DisGeNET" id="4176"/>
<dbReference type="GeneCards" id="MCM7"/>
<dbReference type="HGNC" id="HGNC:6950">
    <property type="gene designation" value="MCM7"/>
</dbReference>
<dbReference type="HPA" id="ENSG00000166508">
    <property type="expression patterns" value="Tissue enhanced (bone marrow, lymphoid tissue)"/>
</dbReference>
<dbReference type="MalaCards" id="MCM7"/>
<dbReference type="MIM" id="600592">
    <property type="type" value="gene"/>
</dbReference>
<dbReference type="neXtProt" id="NX_P33993"/>
<dbReference type="OpenTargets" id="ENSG00000166508"/>
<dbReference type="Orphanet" id="2512">
    <property type="disease" value="Autosomal recessive primary microcephaly"/>
</dbReference>
<dbReference type="PharmGKB" id="PA30697"/>
<dbReference type="VEuPathDB" id="HostDB:ENSG00000166508"/>
<dbReference type="eggNOG" id="KOG0482">
    <property type="taxonomic scope" value="Eukaryota"/>
</dbReference>
<dbReference type="GeneTree" id="ENSGT01050000244824"/>
<dbReference type="HOGENOM" id="CLU_000995_6_0_1"/>
<dbReference type="InParanoid" id="P33993"/>
<dbReference type="OMA" id="AQHVTYV"/>
<dbReference type="OrthoDB" id="3207464at2759"/>
<dbReference type="PAN-GO" id="P33993">
    <property type="GO annotations" value="8 GO annotations based on evolutionary models"/>
</dbReference>
<dbReference type="PhylomeDB" id="P33993"/>
<dbReference type="TreeFam" id="TF300400"/>
<dbReference type="PathwayCommons" id="P33993"/>
<dbReference type="Reactome" id="R-HSA-176187">
    <property type="pathway name" value="Activation of ATR in response to replication stress"/>
</dbReference>
<dbReference type="Reactome" id="R-HSA-176974">
    <property type="pathway name" value="Unwinding of DNA"/>
</dbReference>
<dbReference type="Reactome" id="R-HSA-68867">
    <property type="pathway name" value="Assembly of the pre-replicative complex"/>
</dbReference>
<dbReference type="Reactome" id="R-HSA-68949">
    <property type="pathway name" value="Orc1 removal from chromatin"/>
</dbReference>
<dbReference type="Reactome" id="R-HSA-68962">
    <property type="pathway name" value="Activation of the pre-replicative complex"/>
</dbReference>
<dbReference type="Reactome" id="R-HSA-69052">
    <property type="pathway name" value="Switching of origins to a post-replicative state"/>
</dbReference>
<dbReference type="SignaLink" id="P33993"/>
<dbReference type="SIGNOR" id="P33993"/>
<dbReference type="BioGRID-ORCS" id="4176">
    <property type="hits" value="807 hits in 1169 CRISPR screens"/>
</dbReference>
<dbReference type="CD-CODE" id="232F8A39">
    <property type="entry name" value="P-body"/>
</dbReference>
<dbReference type="CD-CODE" id="91857CE7">
    <property type="entry name" value="Nucleolus"/>
</dbReference>
<dbReference type="CD-CODE" id="DEE660B4">
    <property type="entry name" value="Stress granule"/>
</dbReference>
<dbReference type="ChiTaRS" id="MCM7">
    <property type="organism name" value="human"/>
</dbReference>
<dbReference type="GeneWiki" id="MCM7"/>
<dbReference type="GenomeRNAi" id="4176"/>
<dbReference type="Pharos" id="P33993">
    <property type="development level" value="Tbio"/>
</dbReference>
<dbReference type="PRO" id="PR:P33993"/>
<dbReference type="Proteomes" id="UP000005640">
    <property type="component" value="Chromosome 7"/>
</dbReference>
<dbReference type="RNAct" id="P33993">
    <property type="molecule type" value="protein"/>
</dbReference>
<dbReference type="Bgee" id="ENSG00000166508">
    <property type="expression patterns" value="Expressed in ganglionic eminence and 99 other cell types or tissues"/>
</dbReference>
<dbReference type="ExpressionAtlas" id="P33993">
    <property type="expression patterns" value="baseline and differential"/>
</dbReference>
<dbReference type="GO" id="GO:0000785">
    <property type="term" value="C:chromatin"/>
    <property type="evidence" value="ECO:0000304"/>
    <property type="project" value="ProtInc"/>
</dbReference>
<dbReference type="GO" id="GO:0000781">
    <property type="term" value="C:chromosome, telomeric region"/>
    <property type="evidence" value="ECO:0007005"/>
    <property type="project" value="BHF-UCL"/>
</dbReference>
<dbReference type="GO" id="GO:0071162">
    <property type="term" value="C:CMG complex"/>
    <property type="evidence" value="ECO:0000353"/>
    <property type="project" value="ComplexPortal"/>
</dbReference>
<dbReference type="GO" id="GO:0042555">
    <property type="term" value="C:MCM complex"/>
    <property type="evidence" value="ECO:0000314"/>
    <property type="project" value="UniProtKB"/>
</dbReference>
<dbReference type="GO" id="GO:0016020">
    <property type="term" value="C:membrane"/>
    <property type="evidence" value="ECO:0007005"/>
    <property type="project" value="UniProtKB"/>
</dbReference>
<dbReference type="GO" id="GO:0005654">
    <property type="term" value="C:nucleoplasm"/>
    <property type="evidence" value="ECO:0000304"/>
    <property type="project" value="Reactome"/>
</dbReference>
<dbReference type="GO" id="GO:0005634">
    <property type="term" value="C:nucleus"/>
    <property type="evidence" value="ECO:0000314"/>
    <property type="project" value="UniProtKB"/>
</dbReference>
<dbReference type="GO" id="GO:0005524">
    <property type="term" value="F:ATP binding"/>
    <property type="evidence" value="ECO:0007669"/>
    <property type="project" value="UniProtKB-KW"/>
</dbReference>
<dbReference type="GO" id="GO:0016887">
    <property type="term" value="F:ATP hydrolysis activity"/>
    <property type="evidence" value="ECO:0007669"/>
    <property type="project" value="InterPro"/>
</dbReference>
<dbReference type="GO" id="GO:0003678">
    <property type="term" value="F:DNA helicase activity"/>
    <property type="evidence" value="ECO:0007669"/>
    <property type="project" value="Ensembl"/>
</dbReference>
<dbReference type="GO" id="GO:0003697">
    <property type="term" value="F:single-stranded DNA binding"/>
    <property type="evidence" value="ECO:0007669"/>
    <property type="project" value="Ensembl"/>
</dbReference>
<dbReference type="GO" id="GO:0008283">
    <property type="term" value="P:cell population proliferation"/>
    <property type="evidence" value="ECO:0007669"/>
    <property type="project" value="Ensembl"/>
</dbReference>
<dbReference type="GO" id="GO:0071364">
    <property type="term" value="P:cellular response to epidermal growth factor stimulus"/>
    <property type="evidence" value="ECO:0007669"/>
    <property type="project" value="Ensembl"/>
</dbReference>
<dbReference type="GO" id="GO:0071466">
    <property type="term" value="P:cellular response to xenobiotic stimulus"/>
    <property type="evidence" value="ECO:0007669"/>
    <property type="project" value="Ensembl"/>
</dbReference>
<dbReference type="GO" id="GO:0006974">
    <property type="term" value="P:DNA damage response"/>
    <property type="evidence" value="ECO:0000315"/>
    <property type="project" value="UniProtKB"/>
</dbReference>
<dbReference type="GO" id="GO:0006260">
    <property type="term" value="P:DNA replication"/>
    <property type="evidence" value="ECO:0000318"/>
    <property type="project" value="GO_Central"/>
</dbReference>
<dbReference type="GO" id="GO:0006270">
    <property type="term" value="P:DNA replication initiation"/>
    <property type="evidence" value="ECO:0000318"/>
    <property type="project" value="GO_Central"/>
</dbReference>
<dbReference type="GO" id="GO:0006271">
    <property type="term" value="P:DNA strand elongation involved in DNA replication"/>
    <property type="evidence" value="ECO:0000318"/>
    <property type="project" value="GO_Central"/>
</dbReference>
<dbReference type="GO" id="GO:0000727">
    <property type="term" value="P:double-strand break repair via break-induced replication"/>
    <property type="evidence" value="ECO:0000318"/>
    <property type="project" value="GO_Central"/>
</dbReference>
<dbReference type="GO" id="GO:0030174">
    <property type="term" value="P:regulation of DNA-templated DNA replication initiation"/>
    <property type="evidence" value="ECO:0000303"/>
    <property type="project" value="ComplexPortal"/>
</dbReference>
<dbReference type="GO" id="GO:0042325">
    <property type="term" value="P:regulation of phosphorylation"/>
    <property type="evidence" value="ECO:0000315"/>
    <property type="project" value="UniProtKB"/>
</dbReference>
<dbReference type="CDD" id="cd17758">
    <property type="entry name" value="MCM7"/>
    <property type="match status" value="1"/>
</dbReference>
<dbReference type="FunFam" id="2.20.28.10:FF:000004">
    <property type="entry name" value="DNA replication licensing factor MCM7"/>
    <property type="match status" value="1"/>
</dbReference>
<dbReference type="FunFam" id="3.30.1640.10:FF:000007">
    <property type="entry name" value="DNA replication licensing factor MCM7"/>
    <property type="match status" value="1"/>
</dbReference>
<dbReference type="FunFam" id="3.40.50.300:FF:000288">
    <property type="entry name" value="DNA replication licensing factor MCM7"/>
    <property type="match status" value="1"/>
</dbReference>
<dbReference type="Gene3D" id="2.20.28.10">
    <property type="match status" value="1"/>
</dbReference>
<dbReference type="Gene3D" id="3.30.1640.10">
    <property type="entry name" value="mini-chromosome maintenance (MCM) complex, chain A, domain 1"/>
    <property type="match status" value="1"/>
</dbReference>
<dbReference type="Gene3D" id="2.40.50.140">
    <property type="entry name" value="Nucleic acid-binding proteins"/>
    <property type="match status" value="1"/>
</dbReference>
<dbReference type="Gene3D" id="3.40.50.300">
    <property type="entry name" value="P-loop containing nucleotide triphosphate hydrolases"/>
    <property type="match status" value="1"/>
</dbReference>
<dbReference type="InterPro" id="IPR003593">
    <property type="entry name" value="AAA+_ATPase"/>
</dbReference>
<dbReference type="InterPro" id="IPR031327">
    <property type="entry name" value="MCM"/>
</dbReference>
<dbReference type="InterPro" id="IPR008050">
    <property type="entry name" value="MCM7"/>
</dbReference>
<dbReference type="InterPro" id="IPR018525">
    <property type="entry name" value="MCM_CS"/>
</dbReference>
<dbReference type="InterPro" id="IPR001208">
    <property type="entry name" value="MCM_dom"/>
</dbReference>
<dbReference type="InterPro" id="IPR041562">
    <property type="entry name" value="MCM_lid"/>
</dbReference>
<dbReference type="InterPro" id="IPR027925">
    <property type="entry name" value="MCM_N"/>
</dbReference>
<dbReference type="InterPro" id="IPR033762">
    <property type="entry name" value="MCM_OB"/>
</dbReference>
<dbReference type="InterPro" id="IPR012340">
    <property type="entry name" value="NA-bd_OB-fold"/>
</dbReference>
<dbReference type="InterPro" id="IPR027417">
    <property type="entry name" value="P-loop_NTPase"/>
</dbReference>
<dbReference type="PANTHER" id="PTHR11630">
    <property type="entry name" value="DNA REPLICATION LICENSING FACTOR MCM FAMILY MEMBER"/>
    <property type="match status" value="1"/>
</dbReference>
<dbReference type="PANTHER" id="PTHR11630:SF26">
    <property type="entry name" value="DNA REPLICATION LICENSING FACTOR MCM7"/>
    <property type="match status" value="1"/>
</dbReference>
<dbReference type="Pfam" id="PF24901">
    <property type="entry name" value="HTH_MCM7"/>
    <property type="match status" value="1"/>
</dbReference>
<dbReference type="Pfam" id="PF00493">
    <property type="entry name" value="MCM"/>
    <property type="match status" value="1"/>
</dbReference>
<dbReference type="Pfam" id="PF17855">
    <property type="entry name" value="MCM_lid"/>
    <property type="match status" value="1"/>
</dbReference>
<dbReference type="Pfam" id="PF14551">
    <property type="entry name" value="MCM_N"/>
    <property type="match status" value="1"/>
</dbReference>
<dbReference type="Pfam" id="PF17207">
    <property type="entry name" value="MCM_OB"/>
    <property type="match status" value="1"/>
</dbReference>
<dbReference type="PRINTS" id="PR01657">
    <property type="entry name" value="MCMFAMILY"/>
</dbReference>
<dbReference type="PRINTS" id="PR01663">
    <property type="entry name" value="MCMPROTEIN7"/>
</dbReference>
<dbReference type="SMART" id="SM00382">
    <property type="entry name" value="AAA"/>
    <property type="match status" value="1"/>
</dbReference>
<dbReference type="SMART" id="SM00350">
    <property type="entry name" value="MCM"/>
    <property type="match status" value="1"/>
</dbReference>
<dbReference type="SUPFAM" id="SSF50249">
    <property type="entry name" value="Nucleic acid-binding proteins"/>
    <property type="match status" value="1"/>
</dbReference>
<dbReference type="SUPFAM" id="SSF52540">
    <property type="entry name" value="P-loop containing nucleoside triphosphate hydrolases"/>
    <property type="match status" value="1"/>
</dbReference>
<dbReference type="PROSITE" id="PS00847">
    <property type="entry name" value="MCM_1"/>
    <property type="match status" value="1"/>
</dbReference>
<dbReference type="PROSITE" id="PS50051">
    <property type="entry name" value="MCM_2"/>
    <property type="match status" value="1"/>
</dbReference>
<sequence>MALKDYALEKEKVKKFLQEFYQDDELGKKQFKYGNQLVRLAHREQVALYVDLDDVAEDDPELVDSICENARRYAKLFADAVQELLPQYKEREVVNKDVLDVYIEHRLMMEQRSRDPGMVRSPQNQYPAELMRRFELYFQGPSSNKPRVIREVRADSVGKLVTVRGIVTRVSEVKPKMVVATYTCDQCGAETYQPIQSPTFMPLIMCPSQECQTNRSGGRLYLQTRGSRFIKFQEMKMQEHSDQVPVGNIPRSITVLVEGENTRIAQPGDHVSVTGIFLPILRTGFRQVVQGLLSETYLEAHRIVKMNKSEDDESGAGELTREELRQIAEEDFYEKLAASIAPEIYGHEDVKKALLLLLVGGVDQSPRGMKIRGNINICLMGDPGVAKSQLLSYIDRLAPRSQYTTGRGSSGVGLTAAVLRDSVSGELTLEGGALVLADQGVCCIDEFDKMAEADRTAIHEVMEQQTISIAKAGILTTLNARCSILAAANPAYGRYNPRRSLEQNIQLPAALLSRFDLLWLIQDRPDRDNDLRLAQHITYVHQHSRQPPSQFEPLDMKLMRRYIAMCREKQPMVPESLADYITAAYVEMRREAWASKDATYTSARTLLAILRLSTALARLRMVDVVEKEDVNEAIRLMEMSKDSLLGDKGQTARTQRPADVIFATVRELVSGGRSVRFSEAEQRCVSRGFTPAQFQAALDEYEELNVWQVNASRTRITFV</sequence>
<comment type="function">
    <text evidence="3 4 10 12 13 14 15 17">Acts as a component of the MCM2-7 complex (MCM complex) which is the replicative helicase essential for 'once per cell cycle' DNA replication initiation and elongation in eukaryotic cells. Core component of CDC45-MCM-GINS (CMG) helicase, the molecular machine that unwinds template DNA during replication, and around which the replisome is built (PubMed:25661590, PubMed:32453425, PubMed:34694004, PubMed:34700328, PubMed:35585232, PubMed:9305914). The active ATPase sites in the MCM2-7 ring are formed through the interaction surfaces of two neighboring subunits such that a critical structure of a conserved arginine finger motif is provided in trans relative to the ATP-binding site of the Walker A box of the adjacent subunit. The six ATPase active sites, however, are likely to contribute differentially to the complex helicase activity (PubMed:32453425). Required for S-phase checkpoint activation upon UV-induced damage.</text>
</comment>
<comment type="catalytic activity">
    <reaction evidence="10">
        <text>ATP + H2O = ADP + phosphate + H(+)</text>
        <dbReference type="Rhea" id="RHEA:13065"/>
        <dbReference type="ChEBI" id="CHEBI:15377"/>
        <dbReference type="ChEBI" id="CHEBI:15378"/>
        <dbReference type="ChEBI" id="CHEBI:30616"/>
        <dbReference type="ChEBI" id="CHEBI:43474"/>
        <dbReference type="ChEBI" id="CHEBI:456216"/>
        <dbReference type="EC" id="3.6.4.12"/>
    </reaction>
    <physiologicalReaction direction="left-to-right" evidence="10">
        <dbReference type="Rhea" id="RHEA:13066"/>
    </physiologicalReaction>
</comment>
<comment type="subunit">
    <text evidence="2 3 4 5 6 7 9 11 12 13 14 17">Component of the MCM2-7 complex (PubMed:16899510, PubMed:17296731, PubMed:9305914). The complex forms a toroidal hexameric ring with the proposed subunit order MCM2-MCM6-MCM4-MCM7-MCM3-MCM5 (PubMed:16899510, PubMed:17296731, PubMed:32453425, PubMed:9305914). Component of the CMG helicase complex, a hexameric ring of related MCM2-7 subunits stabilized by CDC45 and the tetrameric GINS complex (PubMed:32453425, PubMed:34694004, PubMed:34700328). Interacts with the ATR-ATRIP complex and with RAD17 (PubMed:15210935, PubMed:15538388). Interacts with TIPIN (PubMed:17116885). Interacts with MCMBP (PubMed:17296731). Interacts with ANKRD17 (PubMed:23711367). Component of the replisome complex composed of at least DONSON, MCM2, MCM7, PCNA and TICRR (PubMed:28191891).</text>
</comment>
<comment type="interaction">
    <interactant intactId="EBI-355924">
        <id>P33993</id>
    </interactant>
    <interactant intactId="EBI-8466265">
        <id>Q96MA6</id>
        <label>AK8</label>
    </interactant>
    <organismsDiffer>false</organismsDiffer>
    <experiments>4</experiments>
</comment>
<comment type="interaction">
    <interactant intactId="EBI-355924">
        <id>P33993</id>
    </interactant>
    <interactant intactId="EBI-10171570">
        <id>Q68D86</id>
        <label>CCDC102B</label>
    </interactant>
    <organismsDiffer>false</organismsDiffer>
    <experiments>3</experiments>
</comment>
<comment type="interaction">
    <interactant intactId="EBI-355924">
        <id>P33993</id>
    </interactant>
    <interactant intactId="EBI-519280">
        <id>P46527</id>
        <label>CDKN1B</label>
    </interactant>
    <organismsDiffer>false</organismsDiffer>
    <experiments>2</experiments>
</comment>
<comment type="interaction">
    <interactant intactId="EBI-355924">
        <id>P33993</id>
    </interactant>
    <interactant intactId="EBI-519256">
        <id>P49918</id>
        <label>CDKN1C</label>
    </interactant>
    <organismsDiffer>false</organismsDiffer>
    <experiments>2</experiments>
</comment>
<comment type="interaction">
    <interactant intactId="EBI-355924">
        <id>P33993</id>
    </interactant>
    <interactant intactId="EBI-306914">
        <id>Q13451</id>
        <label>FKBP5</label>
    </interactant>
    <organismsDiffer>false</organismsDiffer>
    <experiments>2</experiments>
</comment>
<comment type="interaction">
    <interactant intactId="EBI-355924">
        <id>P33993</id>
    </interactant>
    <interactant intactId="EBI-618309">
        <id>Q08379</id>
        <label>GOLGA2</label>
    </interactant>
    <organismsDiffer>false</organismsDiffer>
    <experiments>3</experiments>
</comment>
<comment type="interaction">
    <interactant intactId="EBI-355924">
        <id>P33993</id>
    </interactant>
    <interactant intactId="EBI-1381827">
        <id>Q9UL03</id>
        <label>INTS6</label>
    </interactant>
    <organismsDiffer>false</organismsDiffer>
    <experiments>10</experiments>
</comment>
<comment type="interaction">
    <interactant intactId="EBI-355924">
        <id>P33993</id>
    </interactant>
    <interactant intactId="EBI-2125614">
        <id>Q9BVG8</id>
        <label>KIFC3</label>
    </interactant>
    <organismsDiffer>false</organismsDiffer>
    <experiments>3</experiments>
</comment>
<comment type="interaction">
    <interactant intactId="EBI-355924">
        <id>P33993</id>
    </interactant>
    <interactant intactId="EBI-79452">
        <id>P07948</id>
        <label>LYN</label>
    </interactant>
    <organismsDiffer>false</organismsDiffer>
    <experiments>4</experiments>
</comment>
<comment type="interaction">
    <interactant intactId="EBI-355924">
        <id>P33993</id>
    </interactant>
    <interactant intactId="EBI-6895930">
        <id>P07948-1</id>
        <label>LYN</label>
    </interactant>
    <organismsDiffer>false</organismsDiffer>
    <experiments>5</experiments>
</comment>
<comment type="interaction">
    <interactant intactId="EBI-355924">
        <id>P33993</id>
    </interactant>
    <interactant intactId="EBI-10182361">
        <id>Q9NS73-5</id>
        <label>MBIP</label>
    </interactant>
    <organismsDiffer>false</organismsDiffer>
    <experiments>3</experiments>
</comment>
<comment type="interaction">
    <interactant intactId="EBI-355924">
        <id>P33993</id>
    </interactant>
    <interactant intactId="EBI-374819">
        <id>P49736</id>
        <label>MCM2</label>
    </interactant>
    <organismsDiffer>false</organismsDiffer>
    <experiments>23</experiments>
</comment>
<comment type="interaction">
    <interactant intactId="EBI-355924">
        <id>P33993</id>
    </interactant>
    <interactant intactId="EBI-374938">
        <id>P33991</id>
        <label>MCM4</label>
    </interactant>
    <organismsDiffer>false</organismsDiffer>
    <experiments>14</experiments>
</comment>
<comment type="interaction">
    <interactant intactId="EBI-355924">
        <id>P33993</id>
    </interactant>
    <interactant intactId="EBI-359410">
        <id>P33992</id>
        <label>MCM5</label>
    </interactant>
    <organismsDiffer>false</organismsDiffer>
    <experiments>10</experiments>
</comment>
<comment type="interaction">
    <interactant intactId="EBI-355924">
        <id>P33993</id>
    </interactant>
    <interactant intactId="EBI-374900">
        <id>Q14566</id>
        <label>MCM6</label>
    </interactant>
    <organismsDiffer>false</organismsDiffer>
    <experiments>6</experiments>
</comment>
<comment type="interaction">
    <interactant intactId="EBI-355924">
        <id>P33993</id>
    </interactant>
    <interactant intactId="EBI-749378">
        <id>Q9BTE3</id>
        <label>MCMBP</label>
    </interactant>
    <organismsDiffer>false</organismsDiffer>
    <experiments>21</experiments>
</comment>
<comment type="interaction">
    <interactant intactId="EBI-355924">
        <id>P33993</id>
    </interactant>
    <interactant intactId="EBI-9384556">
        <id>Q9BTE3-2</id>
        <label>MCMBP</label>
    </interactant>
    <organismsDiffer>false</organismsDiffer>
    <experiments>6</experiments>
</comment>
<comment type="interaction">
    <interactant intactId="EBI-355924">
        <id>P33993</id>
    </interactant>
    <interactant intactId="EBI-2548751">
        <id>Q8TD10</id>
        <label>MIPOL1</label>
    </interactant>
    <organismsDiffer>false</organismsDiffer>
    <experiments>3</experiments>
</comment>
<comment type="interaction">
    <interactant intactId="EBI-355924">
        <id>P33993</id>
    </interactant>
    <interactant intactId="EBI-447544">
        <id>P01106</id>
        <label>MYC</label>
    </interactant>
    <organismsDiffer>false</organismsDiffer>
    <experiments>6</experiments>
</comment>
<comment type="interaction">
    <interactant intactId="EBI-355924">
        <id>P33993</id>
    </interactant>
    <interactant intactId="EBI-8641936">
        <id>Q15742</id>
        <label>NAB2</label>
    </interactant>
    <organismsDiffer>false</organismsDiffer>
    <experiments>3</experiments>
</comment>
<comment type="interaction">
    <interactant intactId="EBI-355924">
        <id>P33993</id>
    </interactant>
    <interactant intactId="EBI-476768">
        <id>P53350</id>
        <label>PLK1</label>
    </interactant>
    <organismsDiffer>false</organismsDiffer>
    <experiments>4</experiments>
</comment>
<comment type="interaction">
    <interactant intactId="EBI-355924">
        <id>P33993</id>
    </interactant>
    <interactant intactId="EBI-302345">
        <id>Q8ND90</id>
        <label>PNMA1</label>
    </interactant>
    <organismsDiffer>false</organismsDiffer>
    <experiments>3</experiments>
</comment>
<comment type="interaction">
    <interactant intactId="EBI-355924">
        <id>P33993</id>
    </interactant>
    <interactant intactId="EBI-80690">
        <id>Q14683</id>
        <label>SMC1A</label>
    </interactant>
    <organismsDiffer>false</organismsDiffer>
    <experiments>8</experiments>
</comment>
<comment type="interaction">
    <interactant intactId="EBI-355924">
        <id>P33993</id>
    </interactant>
    <interactant intactId="EBI-8651703">
        <id>Q02086</id>
        <label>SP2</label>
    </interactant>
    <organismsDiffer>false</organismsDiffer>
    <experiments>3</experiments>
</comment>
<comment type="interaction">
    <interactant intactId="EBI-355924">
        <id>P33993</id>
    </interactant>
    <interactant intactId="EBI-353771">
        <id>Q08945</id>
        <label>SSRP1</label>
    </interactant>
    <organismsDiffer>false</organismsDiffer>
    <experiments>3</experiments>
</comment>
<comment type="interaction">
    <interactant intactId="EBI-355924">
        <id>P33993</id>
    </interactant>
    <interactant intactId="EBI-719493">
        <id>P14373</id>
        <label>TRIM27</label>
    </interactant>
    <organismsDiffer>false</organismsDiffer>
    <experiments>3</experiments>
</comment>
<comment type="interaction">
    <interactant intactId="EBI-355924">
        <id>P33993</id>
    </interactant>
    <interactant intactId="EBI-2130429">
        <id>Q9BYV2</id>
        <label>TRIM54</label>
    </interactant>
    <organismsDiffer>false</organismsDiffer>
    <experiments>3</experiments>
</comment>
<comment type="interaction">
    <interactant intactId="EBI-355924">
        <id>P33993</id>
    </interactant>
    <interactant intactId="EBI-413034">
        <id>P0CG47</id>
        <label>UBB</label>
    </interactant>
    <organismsDiffer>false</organismsDiffer>
    <experiments>2</experiments>
</comment>
<comment type="interaction">
    <interactant intactId="EBI-355924">
        <id>P33993</id>
    </interactant>
    <interactant intactId="EBI-10173939">
        <id>Q9UMX0-2</id>
        <label>UBQLN1</label>
    </interactant>
    <organismsDiffer>false</organismsDiffer>
    <experiments>3</experiments>
</comment>
<comment type="interaction">
    <interactant intactId="EBI-355924">
        <id>P33993</id>
    </interactant>
    <interactant intactId="EBI-739895">
        <id>Q8N6Y0</id>
        <label>USHBP1</label>
    </interactant>
    <organismsDiffer>false</organismsDiffer>
    <experiments>3</experiments>
</comment>
<comment type="interaction">
    <interactant intactId="EBI-355924">
        <id>P33993</id>
    </interactant>
    <interactant intactId="EBI-1177242">
        <id>P03126</id>
        <label>E6</label>
    </interactant>
    <organismsDiffer>true</organismsDiffer>
    <experiments>2</experiments>
</comment>
<comment type="interaction">
    <interactant intactId="EBI-355924">
        <id>P33993</id>
    </interactant>
    <interactant intactId="EBI-7069993">
        <id>P06462</id>
        <label>E6</label>
    </interactant>
    <organismsDiffer>true</organismsDiffer>
    <experiments>2</experiments>
</comment>
<comment type="interaction">
    <interactant intactId="EBI-355924">
        <id>P33993</id>
    </interactant>
    <interactant intactId="EBI-1186926">
        <id>P06463</id>
        <label>E6</label>
    </interactant>
    <organismsDiffer>true</organismsDiffer>
    <experiments>2</experiments>
</comment>
<comment type="interaction">
    <interactant intactId="EBI-11741465">
        <id>P33993-2</id>
    </interactant>
    <interactant intactId="EBI-348399">
        <id>P22607</id>
        <label>FGFR3</label>
    </interactant>
    <organismsDiffer>false</organismsDiffer>
    <experiments>3</experiments>
</comment>
<comment type="interaction">
    <interactant intactId="EBI-11741465">
        <id>P33993-2</id>
    </interactant>
    <interactant intactId="EBI-351506">
        <id>P06396</id>
        <label>GSN</label>
    </interactant>
    <organismsDiffer>false</organismsDiffer>
    <experiments>3</experiments>
</comment>
<comment type="interaction">
    <interactant intactId="EBI-11741465">
        <id>P33993-2</id>
    </interactant>
    <interactant intactId="EBI-25900580">
        <id>Q9Y649</id>
    </interactant>
    <organismsDiffer>false</organismsDiffer>
    <experiments>3</experiments>
</comment>
<comment type="subcellular location">
    <subcellularLocation>
        <location evidence="23">Nucleus</location>
    </subcellularLocation>
    <subcellularLocation>
        <location evidence="23">Chromosome</location>
    </subcellularLocation>
    <text evidence="23">Associated with chromatin before the formation of nuclei and detaches from it as DNA replication progresses.</text>
</comment>
<comment type="alternative products">
    <event type="alternative splicing"/>
    <isoform>
        <id>P33993-1</id>
        <name>1</name>
        <sequence type="displayed"/>
    </isoform>
    <isoform>
        <id>P33993-2</id>
        <name>2</name>
        <sequence type="described" ref="VSP_003205"/>
    </isoform>
    <isoform>
        <id>P33993-3</id>
        <name>3</name>
        <sequence type="described" ref="VSP_044310"/>
    </isoform>
</comment>
<comment type="PTM">
    <text evidence="8">O-glycosylated (O-GlcNAcylated), in a cell cycle-dependent manner.</text>
</comment>
<comment type="PTM">
    <text evidence="1 2">Ubiquitinated by ECS(LRR1) E3 ubiquitin-protein ligase complex when forks converge following formation of DNA interstrand cross-links. During mitosis, ubiquitinated by TRAIP when forks converge following formation of DNA interstrand cross-links (By similarity). Short ubiquitin chains on MCM7 promote recruitment of DNA glycosylase NEIL3 (By similarity). If the interstrand cross-link cannot be cleaved by NEIL3, the ubiquitin chains continue to grow on MCM7, promoting the unloading of the CMG helicase complex by the VCP/p97 ATPase (By similarity).</text>
</comment>
<comment type="miscellaneous">
    <text evidence="1">Early fractionation of eukaryotic MCM proteins yielded a variety of dimeric, trimeric and tetrameric complexes with unclear biological significance. Specifically a MCM467 subcomplex is shown to have in vitro helicase activity which is inhibited by the MCM2 subunit. The MCM2-7 hexamer is the proposed physiological active complex.</text>
</comment>
<comment type="similarity">
    <text evidence="21">Belongs to the MCM family.</text>
</comment>
<feature type="initiator methionine" description="Removed" evidence="18 33">
    <location>
        <position position="1"/>
    </location>
</feature>
<feature type="chain" id="PRO_0000194119" description="DNA replication licensing factor MCM7">
    <location>
        <begin position="2"/>
        <end position="719"/>
    </location>
</feature>
<feature type="domain" description="MCM">
    <location>
        <begin position="332"/>
        <end position="538"/>
    </location>
</feature>
<feature type="region of interest" description="Interaction with RAD17" evidence="4">
    <location>
        <begin position="521"/>
        <end position="564"/>
    </location>
</feature>
<feature type="region of interest" description="Interaction with ATRIP">
    <location>
        <begin position="577"/>
        <end position="719"/>
    </location>
</feature>
<feature type="short sequence motif" description="Arginine finger">
    <location>
        <begin position="513"/>
        <end position="516"/>
    </location>
</feature>
<feature type="binding site" evidence="22 25">
    <location>
        <position position="345"/>
    </location>
    <ligand>
        <name>ATP</name>
        <dbReference type="ChEBI" id="CHEBI:30616"/>
        <label>1</label>
        <note>ligand shared with MCM3</note>
    </ligand>
</feature>
<feature type="binding site" evidence="22 25">
    <location>
        <position position="384"/>
    </location>
    <ligand>
        <name>ATP</name>
        <dbReference type="ChEBI" id="CHEBI:30616"/>
        <label>1</label>
        <note>ligand shared with MCM3</note>
    </ligand>
</feature>
<feature type="binding site" evidence="22 25">
    <location>
        <position position="386"/>
    </location>
    <ligand>
        <name>ATP</name>
        <dbReference type="ChEBI" id="CHEBI:30616"/>
        <label>1</label>
        <note>ligand shared with MCM3</note>
    </ligand>
</feature>
<feature type="binding site" evidence="22 25">
    <location>
        <position position="387"/>
    </location>
    <ligand>
        <name>ATP</name>
        <dbReference type="ChEBI" id="CHEBI:30616"/>
        <label>1</label>
        <note>ligand shared with MCM3</note>
    </ligand>
</feature>
<feature type="binding site" evidence="22 25">
    <location>
        <position position="388"/>
    </location>
    <ligand>
        <name>ATP</name>
        <dbReference type="ChEBI" id="CHEBI:30616"/>
        <label>1</label>
        <note>ligand shared with MCM3</note>
    </ligand>
</feature>
<feature type="binding site" evidence="22 25">
    <location>
        <position position="489"/>
    </location>
    <ligand>
        <name>ATP</name>
        <dbReference type="ChEBI" id="CHEBI:30616"/>
        <label>1</label>
        <note>ligand shared with MCM3</note>
    </ligand>
</feature>
<feature type="binding site" evidence="22 25">
    <location>
        <position position="514"/>
    </location>
    <ligand>
        <name>ATP</name>
        <dbReference type="ChEBI" id="CHEBI:30616"/>
        <label>2</label>
        <note>ligand shared with MCM4</note>
    </ligand>
</feature>
<feature type="binding site" evidence="22 25">
    <location>
        <position position="604"/>
    </location>
    <ligand>
        <name>ATP</name>
        <dbReference type="ChEBI" id="CHEBI:30616"/>
        <label>2</label>
        <note>ligand shared with MCM4</note>
    </ligand>
</feature>
<feature type="modified residue" description="N-acetylalanine" evidence="18 33">
    <location>
        <position position="2"/>
    </location>
</feature>
<feature type="modified residue" description="Phosphoserine" evidence="29 30 32 34">
    <location>
        <position position="121"/>
    </location>
</feature>
<feature type="modified residue" description="Phosphoserine" evidence="34">
    <location>
        <position position="314"/>
    </location>
</feature>
<feature type="modified residue" description="Phosphoserine" evidence="32">
    <location>
        <position position="365"/>
    </location>
</feature>
<feature type="modified residue" description="Phosphoserine" evidence="29 30 31 32 34">
    <location>
        <position position="500"/>
    </location>
</feature>
<feature type="modified residue" description="Phosphoserine" evidence="34">
    <location>
        <position position="678"/>
    </location>
</feature>
<feature type="cross-link" description="Glycyl lysine isopeptide (Lys-Gly) (interchain with G-Cter in SUMO2)" evidence="35">
    <location>
        <position position="15"/>
    </location>
</feature>
<feature type="cross-link" description="Glycyl lysine isopeptide (Lys-Gly) (interchain with G-Cter in SUMO2)" evidence="35">
    <location>
        <position position="28"/>
    </location>
</feature>
<feature type="splice variant" id="VSP_044310" description="In isoform 3." evidence="19">
    <location>
        <begin position="1"/>
        <end position="176"/>
    </location>
</feature>
<feature type="splice variant" id="VSP_003205" description="In isoform 2." evidence="20">
    <location>
        <begin position="329"/>
        <end position="658"/>
    </location>
</feature>
<feature type="sequence variant" id="VAR_029243" description="In dbSNP:rs2307348.">
    <original>R</original>
    <variation>Q</variation>
    <location>
        <position position="114"/>
    </location>
</feature>
<feature type="sequence variant" id="VAR_013297" description="In dbSNP:rs2070215." evidence="16">
    <original>N</original>
    <variation>S</variation>
    <location>
        <position position="144"/>
    </location>
</feature>
<feature type="sequence variant" id="VAR_014817" description="In dbSNP:rs2307347.">
    <original>G</original>
    <variation>S</variation>
    <location>
        <position position="473"/>
    </location>
</feature>
<feature type="sequence conflict" description="In Ref. 6; CAA52803." evidence="21" ref="6">
    <original>I</original>
    <variation>L</variation>
    <location>
        <position position="103"/>
    </location>
</feature>
<feature type="helix" evidence="36">
    <location>
        <begin position="6"/>
        <end position="19"/>
    </location>
</feature>
<feature type="helix" evidence="36">
    <location>
        <begin position="32"/>
        <end position="41"/>
    </location>
</feature>
<feature type="turn" evidence="36">
    <location>
        <begin position="42"/>
        <end position="44"/>
    </location>
</feature>
<feature type="strand" evidence="36">
    <location>
        <begin position="46"/>
        <end position="51"/>
    </location>
</feature>
<feature type="turn" evidence="36">
    <location>
        <begin position="52"/>
        <end position="54"/>
    </location>
</feature>
<feature type="helix" evidence="36">
    <location>
        <begin position="55"/>
        <end position="57"/>
    </location>
</feature>
<feature type="helix" evidence="36">
    <location>
        <begin position="60"/>
        <end position="68"/>
    </location>
</feature>
<feature type="helix" evidence="36">
    <location>
        <begin position="70"/>
        <end position="88"/>
    </location>
</feature>
<feature type="helix" evidence="36">
    <location>
        <begin position="98"/>
        <end position="113"/>
    </location>
</feature>
<feature type="strand" evidence="36">
    <location>
        <begin position="116"/>
        <end position="118"/>
    </location>
</feature>
<feature type="helix" evidence="36">
    <location>
        <begin position="122"/>
        <end position="124"/>
    </location>
</feature>
<feature type="helix" evidence="36">
    <location>
        <begin position="128"/>
        <end position="131"/>
    </location>
</feature>
<feature type="strand" evidence="36">
    <location>
        <begin position="135"/>
        <end position="139"/>
    </location>
</feature>
<feature type="strand" evidence="36">
    <location>
        <begin position="142"/>
        <end position="144"/>
    </location>
</feature>
<feature type="helix" evidence="36">
    <location>
        <begin position="149"/>
        <end position="151"/>
    </location>
</feature>
<feature type="helix" evidence="36">
    <location>
        <begin position="154"/>
        <end position="156"/>
    </location>
</feature>
<feature type="strand" evidence="36">
    <location>
        <begin position="159"/>
        <end position="170"/>
    </location>
</feature>
<feature type="strand" evidence="36">
    <location>
        <begin position="174"/>
        <end position="183"/>
    </location>
</feature>
<feature type="strand" evidence="36">
    <location>
        <begin position="185"/>
        <end position="188"/>
    </location>
</feature>
<feature type="strand" evidence="36">
    <location>
        <begin position="190"/>
        <end position="194"/>
    </location>
</feature>
<feature type="strand" evidence="36">
    <location>
        <begin position="197"/>
        <end position="200"/>
    </location>
</feature>
<feature type="helix" evidence="36">
    <location>
        <begin position="209"/>
        <end position="214"/>
    </location>
</feature>
<feature type="strand" evidence="36">
    <location>
        <begin position="221"/>
        <end position="238"/>
    </location>
</feature>
<feature type="turn" evidence="36">
    <location>
        <begin position="241"/>
        <end position="243"/>
    </location>
</feature>
<feature type="strand" evidence="36">
    <location>
        <begin position="252"/>
        <end position="257"/>
    </location>
</feature>
<feature type="turn" evidence="36">
    <location>
        <begin position="259"/>
        <end position="263"/>
    </location>
</feature>
<feature type="strand" evidence="36">
    <location>
        <begin position="270"/>
        <end position="281"/>
    </location>
</feature>
<feature type="strand" evidence="36">
    <location>
        <begin position="293"/>
        <end position="304"/>
    </location>
</feature>
<feature type="helix" evidence="36">
    <location>
        <begin position="348"/>
        <end position="359"/>
    </location>
</feature>
<feature type="strand" evidence="36">
    <location>
        <begin position="377"/>
        <end position="381"/>
    </location>
</feature>
<feature type="helix" evidence="36">
    <location>
        <begin position="388"/>
        <end position="397"/>
    </location>
</feature>
<feature type="strand" evidence="36">
    <location>
        <begin position="398"/>
        <end position="404"/>
    </location>
</feature>
<feature type="helix" evidence="36">
    <location>
        <begin position="407"/>
        <end position="409"/>
    </location>
</feature>
<feature type="helix" evidence="36">
    <location>
        <begin position="411"/>
        <end position="413"/>
    </location>
</feature>
<feature type="strand" evidence="36">
    <location>
        <begin position="414"/>
        <end position="419"/>
    </location>
</feature>
<feature type="strand" evidence="36">
    <location>
        <begin position="428"/>
        <end position="431"/>
    </location>
</feature>
<feature type="helix" evidence="36">
    <location>
        <begin position="433"/>
        <end position="436"/>
    </location>
</feature>
<feature type="turn" evidence="36">
    <location>
        <begin position="437"/>
        <end position="439"/>
    </location>
</feature>
<feature type="strand" evidence="36">
    <location>
        <begin position="440"/>
        <end position="446"/>
    </location>
</feature>
<feature type="helix" evidence="36">
    <location>
        <begin position="447"/>
        <end position="449"/>
    </location>
</feature>
<feature type="helix" evidence="36">
    <location>
        <begin position="452"/>
        <end position="463"/>
    </location>
</feature>
<feature type="strand" evidence="36">
    <location>
        <begin position="465"/>
        <end position="471"/>
    </location>
</feature>
<feature type="strand" evidence="36">
    <location>
        <begin position="474"/>
        <end position="479"/>
    </location>
</feature>
<feature type="strand" evidence="36">
    <location>
        <begin position="483"/>
        <end position="488"/>
    </location>
</feature>
<feature type="helix" evidence="36">
    <location>
        <begin position="509"/>
        <end position="514"/>
    </location>
</feature>
<feature type="strand" evidence="36">
    <location>
        <begin position="516"/>
        <end position="521"/>
    </location>
</feature>
<feature type="helix" evidence="36">
    <location>
        <begin position="527"/>
        <end position="543"/>
    </location>
</feature>
<feature type="helix" evidence="36">
    <location>
        <begin position="557"/>
        <end position="566"/>
    </location>
</feature>
<feature type="helix" evidence="36">
    <location>
        <begin position="575"/>
        <end position="594"/>
    </location>
</feature>
<feature type="helix" evidence="36">
    <location>
        <begin position="603"/>
        <end position="620"/>
    </location>
</feature>
<feature type="helix" evidence="36">
    <location>
        <begin position="627"/>
        <end position="641"/>
    </location>
</feature>
<evidence type="ECO:0000250" key="1">
    <source>
        <dbReference type="UniProtKB" id="Q61881"/>
    </source>
</evidence>
<evidence type="ECO:0000250" key="2">
    <source>
        <dbReference type="UniProtKB" id="Q91876"/>
    </source>
</evidence>
<evidence type="ECO:0000269" key="3">
    <source>
    </source>
</evidence>
<evidence type="ECO:0000269" key="4">
    <source>
    </source>
</evidence>
<evidence type="ECO:0000269" key="5">
    <source>
    </source>
</evidence>
<evidence type="ECO:0000269" key="6">
    <source>
    </source>
</evidence>
<evidence type="ECO:0000269" key="7">
    <source>
    </source>
</evidence>
<evidence type="ECO:0000269" key="8">
    <source>
    </source>
</evidence>
<evidence type="ECO:0000269" key="9">
    <source>
    </source>
</evidence>
<evidence type="ECO:0000269" key="10">
    <source>
    </source>
</evidence>
<evidence type="ECO:0000269" key="11">
    <source>
    </source>
</evidence>
<evidence type="ECO:0000269" key="12">
    <source>
    </source>
</evidence>
<evidence type="ECO:0000269" key="13">
    <source>
    </source>
</evidence>
<evidence type="ECO:0000269" key="14">
    <source>
    </source>
</evidence>
<evidence type="ECO:0000269" key="15">
    <source>
    </source>
</evidence>
<evidence type="ECO:0000269" key="16">
    <source>
    </source>
</evidence>
<evidence type="ECO:0000269" key="17">
    <source>
    </source>
</evidence>
<evidence type="ECO:0000269" key="18">
    <source ref="7"/>
</evidence>
<evidence type="ECO:0000303" key="19">
    <source>
    </source>
</evidence>
<evidence type="ECO:0000303" key="20">
    <source>
    </source>
</evidence>
<evidence type="ECO:0000305" key="21"/>
<evidence type="ECO:0000305" key="22">
    <source>
    </source>
</evidence>
<evidence type="ECO:0000305" key="23">
    <source>
    </source>
</evidence>
<evidence type="ECO:0000312" key="24">
    <source>
        <dbReference type="HGNC" id="HGNC:6950"/>
    </source>
</evidence>
<evidence type="ECO:0007744" key="25">
    <source>
        <dbReference type="PDB" id="6XTX"/>
    </source>
</evidence>
<evidence type="ECO:0007744" key="26">
    <source>
        <dbReference type="PDB" id="6XTY"/>
    </source>
</evidence>
<evidence type="ECO:0007744" key="27">
    <source>
        <dbReference type="PDB" id="7PFO"/>
    </source>
</evidence>
<evidence type="ECO:0007744" key="28">
    <source>
        <dbReference type="PDB" id="7PLO"/>
    </source>
</evidence>
<evidence type="ECO:0007744" key="29">
    <source>
    </source>
</evidence>
<evidence type="ECO:0007744" key="30">
    <source>
    </source>
</evidence>
<evidence type="ECO:0007744" key="31">
    <source>
    </source>
</evidence>
<evidence type="ECO:0007744" key="32">
    <source>
    </source>
</evidence>
<evidence type="ECO:0007744" key="33">
    <source>
    </source>
</evidence>
<evidence type="ECO:0007744" key="34">
    <source>
    </source>
</evidence>
<evidence type="ECO:0007744" key="35">
    <source>
    </source>
</evidence>
<evidence type="ECO:0007829" key="36">
    <source>
        <dbReference type="PDB" id="8S09"/>
    </source>
</evidence>
<organism>
    <name type="scientific">Homo sapiens</name>
    <name type="common">Human</name>
    <dbReference type="NCBI Taxonomy" id="9606"/>
    <lineage>
        <taxon>Eukaryota</taxon>
        <taxon>Metazoa</taxon>
        <taxon>Chordata</taxon>
        <taxon>Craniata</taxon>
        <taxon>Vertebrata</taxon>
        <taxon>Euteleostomi</taxon>
        <taxon>Mammalia</taxon>
        <taxon>Eutheria</taxon>
        <taxon>Euarchontoglires</taxon>
        <taxon>Primates</taxon>
        <taxon>Haplorrhini</taxon>
        <taxon>Catarrhini</taxon>
        <taxon>Hominidae</taxon>
        <taxon>Homo</taxon>
    </lineage>
</organism>
<gene>
    <name evidence="24" type="primary">MCM7</name>
    <name type="synonym">CDC47</name>
    <name type="synonym">MCM2</name>
</gene>
<name>MCM7_HUMAN</name>
<accession>P33993</accession>
<accession>A4D2A1</accession>
<accession>A4D2A2</accession>
<accession>E9PGN9</accession>
<accession>Q15076</accession>
<accession>Q96D34</accession>
<accession>Q96GL1</accession>
<reference key="1">
    <citation type="journal article" date="1996" name="J. Biol. Chem.">
        <title>hCDC47, a human member of the MCM family. Dissociation of the nucleus-bound form during S phase.</title>
        <authorList>
            <person name="Fujita M."/>
            <person name="Kiyono T."/>
            <person name="Hayashi Y."/>
            <person name="Ishibashi M."/>
        </authorList>
    </citation>
    <scope>NUCLEOTIDE SEQUENCE [MRNA] (ISOFORM 1)</scope>
    <scope>VARIANT SER-144</scope>
</reference>
<reference key="2">
    <citation type="journal article" date="2004" name="Nat. Genet.">
        <title>Complete sequencing and characterization of 21,243 full-length human cDNAs.</title>
        <authorList>
            <person name="Ota T."/>
            <person name="Suzuki Y."/>
            <person name="Nishikawa T."/>
            <person name="Otsuki T."/>
            <person name="Sugiyama T."/>
            <person name="Irie R."/>
            <person name="Wakamatsu A."/>
            <person name="Hayashi K."/>
            <person name="Sato H."/>
            <person name="Nagai K."/>
            <person name="Kimura K."/>
            <person name="Makita H."/>
            <person name="Sekine M."/>
            <person name="Obayashi M."/>
            <person name="Nishi T."/>
            <person name="Shibahara T."/>
            <person name="Tanaka T."/>
            <person name="Ishii S."/>
            <person name="Yamamoto J."/>
            <person name="Saito K."/>
            <person name="Kawai Y."/>
            <person name="Isono Y."/>
            <person name="Nakamura Y."/>
            <person name="Nagahari K."/>
            <person name="Murakami K."/>
            <person name="Yasuda T."/>
            <person name="Iwayanagi T."/>
            <person name="Wagatsuma M."/>
            <person name="Shiratori A."/>
            <person name="Sudo H."/>
            <person name="Hosoiri T."/>
            <person name="Kaku Y."/>
            <person name="Kodaira H."/>
            <person name="Kondo H."/>
            <person name="Sugawara M."/>
            <person name="Takahashi M."/>
            <person name="Kanda K."/>
            <person name="Yokoi T."/>
            <person name="Furuya T."/>
            <person name="Kikkawa E."/>
            <person name="Omura Y."/>
            <person name="Abe K."/>
            <person name="Kamihara K."/>
            <person name="Katsuta N."/>
            <person name="Sato K."/>
            <person name="Tanikawa M."/>
            <person name="Yamazaki M."/>
            <person name="Ninomiya K."/>
            <person name="Ishibashi T."/>
            <person name="Yamashita H."/>
            <person name="Murakawa K."/>
            <person name="Fujimori K."/>
            <person name="Tanai H."/>
            <person name="Kimata M."/>
            <person name="Watanabe M."/>
            <person name="Hiraoka S."/>
            <person name="Chiba Y."/>
            <person name="Ishida S."/>
            <person name="Ono Y."/>
            <person name="Takiguchi S."/>
            <person name="Watanabe S."/>
            <person name="Yosida M."/>
            <person name="Hotuta T."/>
            <person name="Kusano J."/>
            <person name="Kanehori K."/>
            <person name="Takahashi-Fujii A."/>
            <person name="Hara H."/>
            <person name="Tanase T.-O."/>
            <person name="Nomura Y."/>
            <person name="Togiya S."/>
            <person name="Komai F."/>
            <person name="Hara R."/>
            <person name="Takeuchi K."/>
            <person name="Arita M."/>
            <person name="Imose N."/>
            <person name="Musashino K."/>
            <person name="Yuuki H."/>
            <person name="Oshima A."/>
            <person name="Sasaki N."/>
            <person name="Aotsuka S."/>
            <person name="Yoshikawa Y."/>
            <person name="Matsunawa H."/>
            <person name="Ichihara T."/>
            <person name="Shiohata N."/>
            <person name="Sano S."/>
            <person name="Moriya S."/>
            <person name="Momiyama H."/>
            <person name="Satoh N."/>
            <person name="Takami S."/>
            <person name="Terashima Y."/>
            <person name="Suzuki O."/>
            <person name="Nakagawa S."/>
            <person name="Senoh A."/>
            <person name="Mizoguchi H."/>
            <person name="Goto Y."/>
            <person name="Shimizu F."/>
            <person name="Wakebe H."/>
            <person name="Hishigaki H."/>
            <person name="Watanabe T."/>
            <person name="Sugiyama A."/>
            <person name="Takemoto M."/>
            <person name="Kawakami B."/>
            <person name="Yamazaki M."/>
            <person name="Watanabe K."/>
            <person name="Kumagai A."/>
            <person name="Itakura S."/>
            <person name="Fukuzumi Y."/>
            <person name="Fujimori Y."/>
            <person name="Komiyama M."/>
            <person name="Tashiro H."/>
            <person name="Tanigami A."/>
            <person name="Fujiwara T."/>
            <person name="Ono T."/>
            <person name="Yamada K."/>
            <person name="Fujii Y."/>
            <person name="Ozaki K."/>
            <person name="Hirao M."/>
            <person name="Ohmori Y."/>
            <person name="Kawabata A."/>
            <person name="Hikiji T."/>
            <person name="Kobatake N."/>
            <person name="Inagaki H."/>
            <person name="Ikema Y."/>
            <person name="Okamoto S."/>
            <person name="Okitani R."/>
            <person name="Kawakami T."/>
            <person name="Noguchi S."/>
            <person name="Itoh T."/>
            <person name="Shigeta K."/>
            <person name="Senba T."/>
            <person name="Matsumura K."/>
            <person name="Nakajima Y."/>
            <person name="Mizuno T."/>
            <person name="Morinaga M."/>
            <person name="Sasaki M."/>
            <person name="Togashi T."/>
            <person name="Oyama M."/>
            <person name="Hata H."/>
            <person name="Watanabe M."/>
            <person name="Komatsu T."/>
            <person name="Mizushima-Sugano J."/>
            <person name="Satoh T."/>
            <person name="Shirai Y."/>
            <person name="Takahashi Y."/>
            <person name="Nakagawa K."/>
            <person name="Okumura K."/>
            <person name="Nagase T."/>
            <person name="Nomura N."/>
            <person name="Kikuchi H."/>
            <person name="Masuho Y."/>
            <person name="Yamashita R."/>
            <person name="Nakai K."/>
            <person name="Yada T."/>
            <person name="Nakamura Y."/>
            <person name="Ohara O."/>
            <person name="Isogai T."/>
            <person name="Sugano S."/>
        </authorList>
    </citation>
    <scope>NUCLEOTIDE SEQUENCE [LARGE SCALE MRNA] (ISOFORM 3)</scope>
    <source>
        <tissue>Brain</tissue>
    </source>
</reference>
<reference key="3">
    <citation type="journal article" date="2003" name="Science">
        <title>Human chromosome 7: DNA sequence and biology.</title>
        <authorList>
            <person name="Scherer S.W."/>
            <person name="Cheung J."/>
            <person name="MacDonald J.R."/>
            <person name="Osborne L.R."/>
            <person name="Nakabayashi K."/>
            <person name="Herbrick J.-A."/>
            <person name="Carson A.R."/>
            <person name="Parker-Katiraee L."/>
            <person name="Skaug J."/>
            <person name="Khaja R."/>
            <person name="Zhang J."/>
            <person name="Hudek A.K."/>
            <person name="Li M."/>
            <person name="Haddad M."/>
            <person name="Duggan G.E."/>
            <person name="Fernandez B.A."/>
            <person name="Kanematsu E."/>
            <person name="Gentles S."/>
            <person name="Christopoulos C.C."/>
            <person name="Choufani S."/>
            <person name="Kwasnicka D."/>
            <person name="Zheng X.H."/>
            <person name="Lai Z."/>
            <person name="Nusskern D.R."/>
            <person name="Zhang Q."/>
            <person name="Gu Z."/>
            <person name="Lu F."/>
            <person name="Zeesman S."/>
            <person name="Nowaczyk M.J."/>
            <person name="Teshima I."/>
            <person name="Chitayat D."/>
            <person name="Shuman C."/>
            <person name="Weksberg R."/>
            <person name="Zackai E.H."/>
            <person name="Grebe T.A."/>
            <person name="Cox S.R."/>
            <person name="Kirkpatrick S.J."/>
            <person name="Rahman N."/>
            <person name="Friedman J.M."/>
            <person name="Heng H.H.Q."/>
            <person name="Pelicci P.G."/>
            <person name="Lo-Coco F."/>
            <person name="Belloni E."/>
            <person name="Shaffer L.G."/>
            <person name="Pober B."/>
            <person name="Morton C.C."/>
            <person name="Gusella J.F."/>
            <person name="Bruns G.A.P."/>
            <person name="Korf B.R."/>
            <person name="Quade B.J."/>
            <person name="Ligon A.H."/>
            <person name="Ferguson H."/>
            <person name="Higgins A.W."/>
            <person name="Leach N.T."/>
            <person name="Herrick S.R."/>
            <person name="Lemyre E."/>
            <person name="Farra C.G."/>
            <person name="Kim H.-G."/>
            <person name="Summers A.M."/>
            <person name="Gripp K.W."/>
            <person name="Roberts W."/>
            <person name="Szatmari P."/>
            <person name="Winsor E.J.T."/>
            <person name="Grzeschik K.-H."/>
            <person name="Teebi A."/>
            <person name="Minassian B.A."/>
            <person name="Kere J."/>
            <person name="Armengol L."/>
            <person name="Pujana M.A."/>
            <person name="Estivill X."/>
            <person name="Wilson M.D."/>
            <person name="Koop B.F."/>
            <person name="Tosi S."/>
            <person name="Moore G.E."/>
            <person name="Boright A.P."/>
            <person name="Zlotorynski E."/>
            <person name="Kerem B."/>
            <person name="Kroisel P.M."/>
            <person name="Petek E."/>
            <person name="Oscier D.G."/>
            <person name="Mould S.J."/>
            <person name="Doehner H."/>
            <person name="Doehner K."/>
            <person name="Rommens J.M."/>
            <person name="Vincent J.B."/>
            <person name="Venter J.C."/>
            <person name="Li P.W."/>
            <person name="Mural R.J."/>
            <person name="Adams M.D."/>
            <person name="Tsui L.-C."/>
        </authorList>
    </citation>
    <scope>NUCLEOTIDE SEQUENCE [LARGE SCALE GENOMIC DNA]</scope>
</reference>
<reference key="4">
    <citation type="journal article" date="2003" name="Nature">
        <title>The DNA sequence of human chromosome 7.</title>
        <authorList>
            <person name="Hillier L.W."/>
            <person name="Fulton R.S."/>
            <person name="Fulton L.A."/>
            <person name="Graves T.A."/>
            <person name="Pepin K.H."/>
            <person name="Wagner-McPherson C."/>
            <person name="Layman D."/>
            <person name="Maas J."/>
            <person name="Jaeger S."/>
            <person name="Walker R."/>
            <person name="Wylie K."/>
            <person name="Sekhon M."/>
            <person name="Becker M.C."/>
            <person name="O'Laughlin M.D."/>
            <person name="Schaller M.E."/>
            <person name="Fewell G.A."/>
            <person name="Delehaunty K.D."/>
            <person name="Miner T.L."/>
            <person name="Nash W.E."/>
            <person name="Cordes M."/>
            <person name="Du H."/>
            <person name="Sun H."/>
            <person name="Edwards J."/>
            <person name="Bradshaw-Cordum H."/>
            <person name="Ali J."/>
            <person name="Andrews S."/>
            <person name="Isak A."/>
            <person name="Vanbrunt A."/>
            <person name="Nguyen C."/>
            <person name="Du F."/>
            <person name="Lamar B."/>
            <person name="Courtney L."/>
            <person name="Kalicki J."/>
            <person name="Ozersky P."/>
            <person name="Bielicki L."/>
            <person name="Scott K."/>
            <person name="Holmes A."/>
            <person name="Harkins R."/>
            <person name="Harris A."/>
            <person name="Strong C.M."/>
            <person name="Hou S."/>
            <person name="Tomlinson C."/>
            <person name="Dauphin-Kohlberg S."/>
            <person name="Kozlowicz-Reilly A."/>
            <person name="Leonard S."/>
            <person name="Rohlfing T."/>
            <person name="Rock S.M."/>
            <person name="Tin-Wollam A.-M."/>
            <person name="Abbott A."/>
            <person name="Minx P."/>
            <person name="Maupin R."/>
            <person name="Strowmatt C."/>
            <person name="Latreille P."/>
            <person name="Miller N."/>
            <person name="Johnson D."/>
            <person name="Murray J."/>
            <person name="Woessner J.P."/>
            <person name="Wendl M.C."/>
            <person name="Yang S.-P."/>
            <person name="Schultz B.R."/>
            <person name="Wallis J.W."/>
            <person name="Spieth J."/>
            <person name="Bieri T.A."/>
            <person name="Nelson J.O."/>
            <person name="Berkowicz N."/>
            <person name="Wohldmann P.E."/>
            <person name="Cook L.L."/>
            <person name="Hickenbotham M.T."/>
            <person name="Eldred J."/>
            <person name="Williams D."/>
            <person name="Bedell J.A."/>
            <person name="Mardis E.R."/>
            <person name="Clifton S.W."/>
            <person name="Chissoe S.L."/>
            <person name="Marra M.A."/>
            <person name="Raymond C."/>
            <person name="Haugen E."/>
            <person name="Gillett W."/>
            <person name="Zhou Y."/>
            <person name="James R."/>
            <person name="Phelps K."/>
            <person name="Iadanoto S."/>
            <person name="Bubb K."/>
            <person name="Simms E."/>
            <person name="Levy R."/>
            <person name="Clendenning J."/>
            <person name="Kaul R."/>
            <person name="Kent W.J."/>
            <person name="Furey T.S."/>
            <person name="Baertsch R.A."/>
            <person name="Brent M.R."/>
            <person name="Keibler E."/>
            <person name="Flicek P."/>
            <person name="Bork P."/>
            <person name="Suyama M."/>
            <person name="Bailey J.A."/>
            <person name="Portnoy M.E."/>
            <person name="Torrents D."/>
            <person name="Chinwalla A.T."/>
            <person name="Gish W.R."/>
            <person name="Eddy S.R."/>
            <person name="McPherson J.D."/>
            <person name="Olson M.V."/>
            <person name="Eichler E.E."/>
            <person name="Green E.D."/>
            <person name="Waterston R.H."/>
            <person name="Wilson R.K."/>
        </authorList>
    </citation>
    <scope>NUCLEOTIDE SEQUENCE [LARGE SCALE GENOMIC DNA]</scope>
</reference>
<reference key="5">
    <citation type="submission" date="2005-09" db="EMBL/GenBank/DDBJ databases">
        <authorList>
            <person name="Mural R.J."/>
            <person name="Istrail S."/>
            <person name="Sutton G.G."/>
            <person name="Florea L."/>
            <person name="Halpern A.L."/>
            <person name="Mobarry C.M."/>
            <person name="Lippert R."/>
            <person name="Walenz B."/>
            <person name="Shatkay H."/>
            <person name="Dew I."/>
            <person name="Miller J.R."/>
            <person name="Flanigan M.J."/>
            <person name="Edwards N.J."/>
            <person name="Bolanos R."/>
            <person name="Fasulo D."/>
            <person name="Halldorsson B.V."/>
            <person name="Hannenhalli S."/>
            <person name="Turner R."/>
            <person name="Yooseph S."/>
            <person name="Lu F."/>
            <person name="Nusskern D.R."/>
            <person name="Shue B.C."/>
            <person name="Zheng X.H."/>
            <person name="Zhong F."/>
            <person name="Delcher A.L."/>
            <person name="Huson D.H."/>
            <person name="Kravitz S.A."/>
            <person name="Mouchard L."/>
            <person name="Reinert K."/>
            <person name="Remington K.A."/>
            <person name="Clark A.G."/>
            <person name="Waterman M.S."/>
            <person name="Eichler E.E."/>
            <person name="Adams M.D."/>
            <person name="Hunkapiller M.W."/>
            <person name="Myers E.W."/>
            <person name="Venter J.C."/>
        </authorList>
    </citation>
    <scope>NUCLEOTIDE SEQUENCE [LARGE SCALE GENOMIC DNA]</scope>
</reference>
<reference key="6">
    <citation type="journal article" date="2004" name="Genome Res.">
        <title>The status, quality, and expansion of the NIH full-length cDNA project: the Mammalian Gene Collection (MGC).</title>
        <authorList>
            <consortium name="The MGC Project Team"/>
        </authorList>
    </citation>
    <scope>NUCLEOTIDE SEQUENCE [LARGE SCALE MRNA] (ISOFORMS 1 AND 2)</scope>
    <source>
        <tissue>Brain</tissue>
        <tissue>Lung</tissue>
    </source>
</reference>
<reference key="7">
    <citation type="submission" date="2008-12" db="UniProtKB">
        <authorList>
            <person name="Bienvenut W.V."/>
            <person name="von Kriegsheim A."/>
            <person name="Kolch W."/>
        </authorList>
    </citation>
    <scope>PROTEIN SEQUENCE OF 2-12; 16-29; 33-39; 76-106; 134-147; 252-282; 472-481; 500-514 AND 605-611</scope>
    <scope>CLEAVAGE OF INITIATOR METHIONINE</scope>
    <scope>ACETYLATION AT ALA-2</scope>
    <scope>IDENTIFICATION BY MASS SPECTROMETRY</scope>
    <source>
        <tissue>Chronic myeloid leukemia cell</tissue>
    </source>
</reference>
<reference key="8">
    <citation type="submission" date="1995-02" db="EMBL/GenBank/DDBJ databases">
        <authorList>
            <person name="Hu B."/>
        </authorList>
    </citation>
    <scope>NUCLEOTIDE SEQUENCE [MRNA] OF 103-719</scope>
</reference>
<reference key="9">
    <citation type="journal article" date="1995" name="Cytogenet. Cell Genet.">
        <title>Isolation and mapping of a human gene (MCM2) encoding a product homologous to yeast proteins involved in DNA replication.</title>
        <authorList>
            <person name="Nakatsuru S."/>
            <person name="Sudo K."/>
            <person name="Nakamura Y."/>
        </authorList>
    </citation>
    <scope>NUCLEOTIDE SEQUENCE [MRNA] OF 177-719</scope>
    <source>
        <tissue>Lung</tissue>
    </source>
</reference>
<reference key="10">
    <citation type="journal article" date="1993" name="Nucleic Acids Res.">
        <title>The P1 family: a new class of nuclear mammalian proteins related to the yeast Mcm replication proteins.</title>
        <authorList>
            <person name="Hu B."/>
            <person name="Burkhart R."/>
            <person name="Schulte D."/>
            <person name="Musahl C."/>
            <person name="Knippers R."/>
        </authorList>
    </citation>
    <scope>NUCLEOTIDE SEQUENCE [MRNA] OF 261-557</scope>
    <source>
        <tissue>Cervix</tissue>
    </source>
</reference>
<reference key="11">
    <citation type="journal article" date="1997" name="J. Biol. Chem.">
        <title>A DNA helicase activity is associated with an MCM4, -6, and -7 protein complex.</title>
        <authorList>
            <person name="Ishimi Y."/>
        </authorList>
    </citation>
    <scope>IDENTIFICATION IN THE MCM2-7 COMPLEX</scope>
    <scope>FUNCTION</scope>
</reference>
<reference key="12">
    <citation type="journal article" date="2004" name="EMBO J.">
        <title>Interaction between human MCM7 and Rad17 proteins is required for replication checkpoint signaling.</title>
        <authorList>
            <person name="Tsao C.-C."/>
            <person name="Geisen C."/>
            <person name="Abraham R.T."/>
        </authorList>
    </citation>
    <scope>FUNCTION</scope>
    <scope>INTERACTION WITH ATR; ATRIP AND RAD17</scope>
</reference>
<reference key="13">
    <citation type="journal article" date="2004" name="Proc. Natl. Acad. Sci. U.S.A.">
        <title>Minichromosome maintenance proteins are direct targets of the ATM and ATR checkpoint kinases.</title>
        <authorList>
            <person name="Cortez D."/>
            <person name="Glick G."/>
            <person name="Elledge S.J."/>
        </authorList>
    </citation>
    <scope>INTERACTION WITH ATRIP</scope>
    <scope>FUNCTION</scope>
</reference>
<reference key="14">
    <citation type="journal article" date="2006" name="Mol. Biol. Cell">
        <title>Essential role of phosphorylation of MCM2 by Cdc7/Dbf4 in the initiation of DNA replication in mammalian cells.</title>
        <authorList>
            <person name="Tsuji T."/>
            <person name="Ficarro S.B."/>
            <person name="Jiang W."/>
        </authorList>
    </citation>
    <scope>IDENTIFICATION IN THE MCM2-7 COMPLEX</scope>
    <scope>ATPASE ACTIVITY OF THE MCM2-7 COMPLEX</scope>
</reference>
<reference key="15">
    <citation type="journal article" date="2006" name="Proc. Natl. Acad. Sci. U.S.A.">
        <title>Tipin and Timeless form a mutually protective complex required for genotoxic stress resistance and checkpoint function.</title>
        <authorList>
            <person name="Chou D.M."/>
            <person name="Elledge S.J."/>
        </authorList>
    </citation>
    <scope>INTERACTION WITH TIPIN</scope>
</reference>
<reference key="16">
    <citation type="journal article" date="2007" name="Mol. Cell. Biol.">
        <title>Identification and characterization of a novel component of the human minichromosome maintenance complex.</title>
        <authorList>
            <person name="Sakwe A.M."/>
            <person name="Nguyen T."/>
            <person name="Athanasopoulos V."/>
            <person name="Shire K."/>
            <person name="Frappier L."/>
        </authorList>
    </citation>
    <scope>HELICASE ACTIVITY OF THE MCM2-3 COMPLEX</scope>
    <scope>INTERACTION WITH MCMBP</scope>
    <scope>IDENTIFICATION IN THE MCM2-7 COMPLEX</scope>
    <scope>IDENTIFICATION BY MASS SPECTROMETRY</scope>
</reference>
<reference key="17">
    <citation type="journal article" date="2008" name="Mol. Cell">
        <title>Kinase-selective enrichment enables quantitative phosphoproteomics of the kinome across the cell cycle.</title>
        <authorList>
            <person name="Daub H."/>
            <person name="Olsen J.V."/>
            <person name="Bairlein M."/>
            <person name="Gnad F."/>
            <person name="Oppermann F.S."/>
            <person name="Korner R."/>
            <person name="Greff Z."/>
            <person name="Keri G."/>
            <person name="Stemmann O."/>
            <person name="Mann M."/>
        </authorList>
    </citation>
    <scope>PHOSPHORYLATION [LARGE SCALE ANALYSIS] AT SER-121 AND SER-500</scope>
    <scope>IDENTIFICATION BY MASS SPECTROMETRY [LARGE SCALE ANALYSIS]</scope>
    <source>
        <tissue>Cervix carcinoma</tissue>
    </source>
</reference>
<reference key="18">
    <citation type="journal article" date="2008" name="Proc. Natl. Acad. Sci. U.S.A.">
        <title>A quantitative atlas of mitotic phosphorylation.</title>
        <authorList>
            <person name="Dephoure N."/>
            <person name="Zhou C."/>
            <person name="Villen J."/>
            <person name="Beausoleil S.A."/>
            <person name="Bakalarski C.E."/>
            <person name="Elledge S.J."/>
            <person name="Gygi S.P."/>
        </authorList>
    </citation>
    <scope>PHOSPHORYLATION [LARGE SCALE ANALYSIS] AT SER-121 AND SER-500</scope>
    <scope>IDENTIFICATION BY MASS SPECTROMETRY [LARGE SCALE ANALYSIS]</scope>
    <source>
        <tissue>Cervix carcinoma</tissue>
    </source>
</reference>
<reference key="19">
    <citation type="journal article" date="2009" name="Sci. Signal.">
        <title>Quantitative phosphoproteomic analysis of T cell receptor signaling reveals system-wide modulation of protein-protein interactions.</title>
        <authorList>
            <person name="Mayya V."/>
            <person name="Lundgren D.H."/>
            <person name="Hwang S.-I."/>
            <person name="Rezaul K."/>
            <person name="Wu L."/>
            <person name="Eng J.K."/>
            <person name="Rodionov V."/>
            <person name="Han D.K."/>
        </authorList>
    </citation>
    <scope>PHOSPHORYLATION [LARGE SCALE ANALYSIS] AT SER-500</scope>
    <scope>IDENTIFICATION BY MASS SPECTROMETRY [LARGE SCALE ANALYSIS]</scope>
    <source>
        <tissue>Leukemic T-cell</tissue>
    </source>
</reference>
<reference key="20">
    <citation type="journal article" date="2010" name="Sci. Signal.">
        <title>Quantitative phosphoproteomics reveals widespread full phosphorylation site occupancy during mitosis.</title>
        <authorList>
            <person name="Olsen J.V."/>
            <person name="Vermeulen M."/>
            <person name="Santamaria A."/>
            <person name="Kumar C."/>
            <person name="Miller M.L."/>
            <person name="Jensen L.J."/>
            <person name="Gnad F."/>
            <person name="Cox J."/>
            <person name="Jensen T.S."/>
            <person name="Nigg E.A."/>
            <person name="Brunak S."/>
            <person name="Mann M."/>
        </authorList>
    </citation>
    <scope>PHOSPHORYLATION [LARGE SCALE ANALYSIS] AT SER-121; SER-365 AND SER-500</scope>
    <scope>IDENTIFICATION BY MASS SPECTROMETRY [LARGE SCALE ANALYSIS]</scope>
    <source>
        <tissue>Cervix carcinoma</tissue>
    </source>
</reference>
<reference key="21">
    <citation type="journal article" date="2011" name="BMC Syst. Biol.">
        <title>Initial characterization of the human central proteome.</title>
        <authorList>
            <person name="Burkard T.R."/>
            <person name="Planyavsky M."/>
            <person name="Kaupe I."/>
            <person name="Breitwieser F.P."/>
            <person name="Buerckstuemmer T."/>
            <person name="Bennett K.L."/>
            <person name="Superti-Furga G."/>
            <person name="Colinge J."/>
        </authorList>
    </citation>
    <scope>IDENTIFICATION BY MASS SPECTROMETRY [LARGE SCALE ANALYSIS]</scope>
</reference>
<reference key="22">
    <citation type="journal article" date="2012" name="Biochim. Biophys. Acta">
        <title>Characterization of O-GlcNAc cycling and proteomic identification of differentially O-GlcNAcylated proteins during G1/S transition.</title>
        <authorList>
            <person name="Drougat L."/>
            <person name="Olivier-Van Stichelen S."/>
            <person name="Mortuaire M."/>
            <person name="Foulquier F."/>
            <person name="Lacoste A.S."/>
            <person name="Michalski J.C."/>
            <person name="Lefebvre T."/>
            <person name="Vercoutter-Edouart A.S."/>
        </authorList>
    </citation>
    <scope>GLYCOSYLATION</scope>
</reference>
<reference key="23">
    <citation type="journal article" date="2012" name="Mol. Cell. Proteomics">
        <title>Comparative large-scale characterisation of plant vs. mammal proteins reveals similar and idiosyncratic N-alpha acetylation features.</title>
        <authorList>
            <person name="Bienvenut W.V."/>
            <person name="Sumpton D."/>
            <person name="Martinez A."/>
            <person name="Lilla S."/>
            <person name="Espagne C."/>
            <person name="Meinnel T."/>
            <person name="Giglione C."/>
        </authorList>
    </citation>
    <scope>ACETYLATION [LARGE SCALE ANALYSIS] AT ALA-2</scope>
    <scope>CLEAVAGE OF INITIATOR METHIONINE [LARGE SCALE ANALYSIS]</scope>
    <scope>IDENTIFICATION BY MASS SPECTROMETRY [LARGE SCALE ANALYSIS]</scope>
</reference>
<reference key="24">
    <citation type="journal article" date="2013" name="FEBS Lett.">
        <title>A role for the Ankyrin repeat containing protein Ankrd17 in Nod1- and Nod2-mediated inflammatory responses.</title>
        <authorList>
            <person name="Menning M."/>
            <person name="Kufer T.A."/>
        </authorList>
    </citation>
    <scope>INTERACTION WITH ANKRD17</scope>
</reference>
<reference key="25">
    <citation type="journal article" date="2013" name="J. Proteome Res.">
        <title>Toward a comprehensive characterization of a human cancer cell phosphoproteome.</title>
        <authorList>
            <person name="Zhou H."/>
            <person name="Di Palma S."/>
            <person name="Preisinger C."/>
            <person name="Peng M."/>
            <person name="Polat A.N."/>
            <person name="Heck A.J."/>
            <person name="Mohammed S."/>
        </authorList>
    </citation>
    <scope>PHOSPHORYLATION [LARGE SCALE ANALYSIS] AT SER-121; SER-314; SER-500 AND SER-678</scope>
    <scope>IDENTIFICATION BY MASS SPECTROMETRY [LARGE SCALE ANALYSIS]</scope>
    <source>
        <tissue>Cervix carcinoma</tissue>
        <tissue>Erythroleukemia</tissue>
    </source>
</reference>
<reference key="26">
    <citation type="journal article" date="2015" name="J. Biochem.">
        <title>G364R mutation of MCM4 detected in human skin cancer cells affects DNA helicase activity of MCM4/6/7 complex.</title>
        <authorList>
            <person name="Ishimi Y."/>
            <person name="Irie D."/>
        </authorList>
    </citation>
    <scope>FUNCTION</scope>
    <scope>CATALYTIC ACTIVITY</scope>
</reference>
<reference key="27">
    <citation type="journal article" date="2017" name="Nat. Genet.">
        <title>Mutations in DONSON disrupt replication fork stability and cause microcephalic dwarfism.</title>
        <authorList>
            <person name="Reynolds J.J."/>
            <person name="Bicknell L.S."/>
            <person name="Carroll P."/>
            <person name="Higgs M.R."/>
            <person name="Shaheen R."/>
            <person name="Murray J.E."/>
            <person name="Papadopoulos D.K."/>
            <person name="Leitch A."/>
            <person name="Murina O."/>
            <person name="Tarnauskaite Z."/>
            <person name="Wessel S.R."/>
            <person name="Zlatanou A."/>
            <person name="Vernet A."/>
            <person name="von Kriegsheim A."/>
            <person name="Mottram R.M."/>
            <person name="Logan C.V."/>
            <person name="Bye H."/>
            <person name="Li Y."/>
            <person name="Brean A."/>
            <person name="Maddirevula S."/>
            <person name="Challis R.C."/>
            <person name="Skouloudaki K."/>
            <person name="Almoisheer A."/>
            <person name="Alsaif H.S."/>
            <person name="Amar A."/>
            <person name="Prescott N.J."/>
            <person name="Bober M.B."/>
            <person name="Duker A."/>
            <person name="Faqeih E."/>
            <person name="Seidahmed M.Z."/>
            <person name="Al Tala S."/>
            <person name="Alswaid A."/>
            <person name="Ahmed S."/>
            <person name="Al-Aama J.Y."/>
            <person name="Altmueller J."/>
            <person name="Al Balwi M."/>
            <person name="Brady A.F."/>
            <person name="Chessa L."/>
            <person name="Cox H."/>
            <person name="Fischetto R."/>
            <person name="Heller R."/>
            <person name="Henderson B.D."/>
            <person name="Hobson E."/>
            <person name="Nuernberg P."/>
            <person name="Percin E.F."/>
            <person name="Peron A."/>
            <person name="Spaccini L."/>
            <person name="Quigley A.J."/>
            <person name="Thakur S."/>
            <person name="Wise C.A."/>
            <person name="Yoon G."/>
            <person name="Alnemer M."/>
            <person name="Tomancak P."/>
            <person name="Yigit G."/>
            <person name="Taylor A.M."/>
            <person name="Reijns M.A."/>
            <person name="Simpson M.A."/>
            <person name="Cortez D."/>
            <person name="Alkuraya F.S."/>
            <person name="Mathew C.G."/>
            <person name="Jackson A.P."/>
            <person name="Stewart G.S."/>
        </authorList>
    </citation>
    <scope>INTERACTION WITH DONSON</scope>
</reference>
<reference key="28">
    <citation type="journal article" date="2017" name="Nat. Struct. Mol. Biol.">
        <title>Site-specific mapping of the human SUMO proteome reveals co-modification with phosphorylation.</title>
        <authorList>
            <person name="Hendriks I.A."/>
            <person name="Lyon D."/>
            <person name="Young C."/>
            <person name="Jensen L.J."/>
            <person name="Vertegaal A.C."/>
            <person name="Nielsen M.L."/>
        </authorList>
    </citation>
    <scope>SUMOYLATION [LARGE SCALE ANALYSIS] AT LYS-15 AND LYS-28</scope>
    <scope>IDENTIFICATION BY MASS SPECTROMETRY [LARGE SCALE ANALYSIS]</scope>
</reference>
<reference key="29">
    <citation type="journal article" date="2022" name="Nature">
        <title>Fast and efficient DNA replication with purified human proteins.</title>
        <authorList>
            <person name="Baris Y."/>
            <person name="Taylor M.R.G."/>
            <person name="Aria V."/>
            <person name="Yeeles J.T.P."/>
        </authorList>
    </citation>
    <scope>FUNCTION</scope>
    <scope>SUBCELLULAR LOCATION</scope>
</reference>
<reference evidence="25 26" key="30">
    <citation type="journal article" date="2020" name="Nucleic Acids Res.">
        <title>CryoEM structures of human CMG-ATPgammaS-DNA and CMG-AND-1 complexes.</title>
        <authorList>
            <person name="Rzechorzek N.J."/>
            <person name="Hardwick S.W."/>
            <person name="Jatikusumo V.A."/>
            <person name="Chirgadze D.Y."/>
            <person name="Pellegrini L."/>
        </authorList>
    </citation>
    <scope>STRUCTURE BY ELECTRON MICROSCOPY (3.29 ANGSTROMS) IN COMPLEXES WITH ATP ANALOG AND WDHD1 IN CMG COMPLEX</scope>
    <scope>SUBUNIT</scope>
</reference>
<reference evidence="28" key="31">
    <citation type="journal article" date="2021" name="Nature">
        <title>A conserved mechanism for regulating replisome disassembly in eukaryotes.</title>
        <authorList>
            <person name="Jenkyn-Bedford M."/>
            <person name="Jones M.L."/>
            <person name="Baris Y."/>
            <person name="Labib K.P.M."/>
            <person name="Cannone G."/>
            <person name="Yeeles J.T.P."/>
            <person name="Deegan T.D."/>
        </authorList>
    </citation>
    <scope>STRUCTURE BY ELECTRON MICROSCOPY (2.80 ANGSTROMS) IN REPLISOME</scope>
    <scope>SUBUNIT</scope>
</reference>
<reference evidence="27" key="32">
    <citation type="journal article" date="2021" name="EMBO J.">
        <title>Structure of a human replisome shows the organisation and interactions of a DNA replication machine.</title>
        <authorList>
            <person name="Jones M.L."/>
            <person name="Baris Y."/>
            <person name="Taylor M.R.G."/>
            <person name="Yeeles J.T.P."/>
        </authorList>
    </citation>
    <scope>STRUCTURE BY ELECTRON MICROSCOPY (3.20 ANGSTROMS) IN REPLISOME</scope>
    <scope>SUBUNIT</scope>
</reference>
<keyword id="KW-0002">3D-structure</keyword>
<keyword id="KW-0007">Acetylation</keyword>
<keyword id="KW-0025">Alternative splicing</keyword>
<keyword id="KW-0067">ATP-binding</keyword>
<keyword id="KW-0131">Cell cycle</keyword>
<keyword id="KW-0158">Chromosome</keyword>
<keyword id="KW-0903">Direct protein sequencing</keyword>
<keyword id="KW-0235">DNA replication</keyword>
<keyword id="KW-0238">DNA-binding</keyword>
<keyword id="KW-0325">Glycoprotein</keyword>
<keyword id="KW-0347">Helicase</keyword>
<keyword id="KW-0378">Hydrolase</keyword>
<keyword id="KW-1017">Isopeptide bond</keyword>
<keyword id="KW-0547">Nucleotide-binding</keyword>
<keyword id="KW-0539">Nucleus</keyword>
<keyword id="KW-0597">Phosphoprotein</keyword>
<keyword id="KW-1267">Proteomics identification</keyword>
<keyword id="KW-1185">Reference proteome</keyword>
<keyword id="KW-0832">Ubl conjugation</keyword>
<proteinExistence type="evidence at protein level"/>